<organism>
    <name type="scientific">Mycoplasma capricolum subsp. capricolum (strain California kid / ATCC 27343 / NCTC 10154)</name>
    <dbReference type="NCBI Taxonomy" id="340047"/>
    <lineage>
        <taxon>Bacteria</taxon>
        <taxon>Bacillati</taxon>
        <taxon>Mycoplasmatota</taxon>
        <taxon>Mollicutes</taxon>
        <taxon>Mycoplasmataceae</taxon>
        <taxon>Mycoplasma</taxon>
    </lineage>
</organism>
<protein>
    <recommendedName>
        <fullName evidence="1">Large ribosomal subunit protein bL9</fullName>
    </recommendedName>
    <alternativeName>
        <fullName evidence="2">50S ribosomal protein L9</fullName>
    </alternativeName>
</protein>
<feature type="chain" id="PRO_0000236546" description="Large ribosomal subunit protein bL9">
    <location>
        <begin position="1"/>
        <end position="147"/>
    </location>
</feature>
<proteinExistence type="inferred from homology"/>
<dbReference type="EMBL" id="CP000123">
    <property type="protein sequence ID" value="ABC01716.1"/>
    <property type="molecule type" value="Genomic_DNA"/>
</dbReference>
<dbReference type="RefSeq" id="WP_011387003.1">
    <property type="nucleotide sequence ID" value="NC_007633.1"/>
</dbReference>
<dbReference type="SMR" id="Q2ST15"/>
<dbReference type="GeneID" id="23778941"/>
<dbReference type="KEGG" id="mcp:MCAP_0106"/>
<dbReference type="HOGENOM" id="CLU_078938_3_2_14"/>
<dbReference type="PhylomeDB" id="Q2ST15"/>
<dbReference type="Proteomes" id="UP000001928">
    <property type="component" value="Chromosome"/>
</dbReference>
<dbReference type="GO" id="GO:1990904">
    <property type="term" value="C:ribonucleoprotein complex"/>
    <property type="evidence" value="ECO:0007669"/>
    <property type="project" value="UniProtKB-KW"/>
</dbReference>
<dbReference type="GO" id="GO:0005840">
    <property type="term" value="C:ribosome"/>
    <property type="evidence" value="ECO:0007669"/>
    <property type="project" value="UniProtKB-KW"/>
</dbReference>
<dbReference type="GO" id="GO:0019843">
    <property type="term" value="F:rRNA binding"/>
    <property type="evidence" value="ECO:0007669"/>
    <property type="project" value="UniProtKB-UniRule"/>
</dbReference>
<dbReference type="GO" id="GO:0003735">
    <property type="term" value="F:structural constituent of ribosome"/>
    <property type="evidence" value="ECO:0007669"/>
    <property type="project" value="InterPro"/>
</dbReference>
<dbReference type="GO" id="GO:0006412">
    <property type="term" value="P:translation"/>
    <property type="evidence" value="ECO:0007669"/>
    <property type="project" value="UniProtKB-UniRule"/>
</dbReference>
<dbReference type="Gene3D" id="3.10.430.100">
    <property type="entry name" value="Ribosomal protein L9, C-terminal domain"/>
    <property type="match status" value="1"/>
</dbReference>
<dbReference type="Gene3D" id="3.40.5.10">
    <property type="entry name" value="Ribosomal protein L9, N-terminal domain"/>
    <property type="match status" value="1"/>
</dbReference>
<dbReference type="HAMAP" id="MF_00503">
    <property type="entry name" value="Ribosomal_bL9"/>
    <property type="match status" value="1"/>
</dbReference>
<dbReference type="InterPro" id="IPR000244">
    <property type="entry name" value="Ribosomal_bL9"/>
</dbReference>
<dbReference type="InterPro" id="IPR009027">
    <property type="entry name" value="Ribosomal_bL9/RNase_H1_N"/>
</dbReference>
<dbReference type="InterPro" id="IPR020594">
    <property type="entry name" value="Ribosomal_bL9_bac/chp"/>
</dbReference>
<dbReference type="InterPro" id="IPR020069">
    <property type="entry name" value="Ribosomal_bL9_C"/>
</dbReference>
<dbReference type="InterPro" id="IPR036791">
    <property type="entry name" value="Ribosomal_bL9_C_sf"/>
</dbReference>
<dbReference type="InterPro" id="IPR020070">
    <property type="entry name" value="Ribosomal_bL9_N"/>
</dbReference>
<dbReference type="InterPro" id="IPR036935">
    <property type="entry name" value="Ribosomal_bL9_N_sf"/>
</dbReference>
<dbReference type="NCBIfam" id="TIGR00158">
    <property type="entry name" value="L9"/>
    <property type="match status" value="1"/>
</dbReference>
<dbReference type="PANTHER" id="PTHR21368">
    <property type="entry name" value="50S RIBOSOMAL PROTEIN L9"/>
    <property type="match status" value="1"/>
</dbReference>
<dbReference type="Pfam" id="PF03948">
    <property type="entry name" value="Ribosomal_L9_C"/>
    <property type="match status" value="1"/>
</dbReference>
<dbReference type="Pfam" id="PF01281">
    <property type="entry name" value="Ribosomal_L9_N"/>
    <property type="match status" value="1"/>
</dbReference>
<dbReference type="SUPFAM" id="SSF55658">
    <property type="entry name" value="L9 N-domain-like"/>
    <property type="match status" value="1"/>
</dbReference>
<dbReference type="SUPFAM" id="SSF55653">
    <property type="entry name" value="Ribosomal protein L9 C-domain"/>
    <property type="match status" value="1"/>
</dbReference>
<keyword id="KW-0687">Ribonucleoprotein</keyword>
<keyword id="KW-0689">Ribosomal protein</keyword>
<keyword id="KW-0694">RNA-binding</keyword>
<keyword id="KW-0699">rRNA-binding</keyword>
<evidence type="ECO:0000255" key="1">
    <source>
        <dbReference type="HAMAP-Rule" id="MF_00503"/>
    </source>
</evidence>
<evidence type="ECO:0000305" key="2"/>
<gene>
    <name evidence="1" type="primary">rplI</name>
    <name type="ordered locus">MCAP_0106</name>
</gene>
<name>RL9_MYCCT</name>
<comment type="function">
    <text evidence="1">Binds to the 23S rRNA.</text>
</comment>
<comment type="similarity">
    <text evidence="1">Belongs to the bacterial ribosomal protein bL9 family.</text>
</comment>
<accession>Q2ST15</accession>
<sequence length="147" mass="16962">MKVIFLKDVPGQGKKNEIKEVSDGYARNYLLPNQLVKIATNNSVKTLKEHLKADQEEKELAKAQTKQIKKTLEELTLHFKLQTNDDKVFGSISSQDIVNQLKDLHRIELDKKKFIRFKNINKIGINYIKVKLDFGIEAIIKVDVKEV</sequence>
<reference key="1">
    <citation type="submission" date="2005-09" db="EMBL/GenBank/DDBJ databases">
        <authorList>
            <person name="Glass J.I."/>
            <person name="Lartigue C."/>
            <person name="Pfannkoch C."/>
            <person name="Baden-Tillson H."/>
            <person name="Smith H.O."/>
            <person name="Venter J.C."/>
            <person name="Roske K."/>
            <person name="Wise K.S."/>
            <person name="Calcutt M.J."/>
            <person name="Nelson W.C."/>
            <person name="Nierman W.C."/>
        </authorList>
    </citation>
    <scope>NUCLEOTIDE SEQUENCE [LARGE SCALE GENOMIC DNA]</scope>
    <source>
        <strain>California kid / ATCC 27343 / NCTC 10154</strain>
    </source>
</reference>